<name>FNKB_DICDI</name>
<keyword id="KW-0067">ATP-binding</keyword>
<keyword id="KW-0418">Kinase</keyword>
<keyword id="KW-0460">Magnesium</keyword>
<keyword id="KW-0479">Metal-binding</keyword>
<keyword id="KW-0547">Nucleotide-binding</keyword>
<keyword id="KW-1185">Reference proteome</keyword>
<keyword id="KW-0677">Repeat</keyword>
<keyword id="KW-0723">Serine/threonine-protein kinase</keyword>
<keyword id="KW-0808">Transferase</keyword>
<gene>
    <name evidence="8" type="primary">fnkB</name>
    <name evidence="3" type="synonym">FNIPK-B</name>
    <name type="ORF">DDB_G0267934</name>
</gene>
<feature type="chain" id="PRO_0000379438" description="Probable serine/threonine-protein kinase fnkB">
    <location>
        <begin position="1"/>
        <end position="530"/>
    </location>
</feature>
<feature type="domain" description="Protein kinase" evidence="5">
    <location>
        <begin position="11"/>
        <end position="268"/>
    </location>
</feature>
<feature type="active site" description="Proton acceptor" evidence="1 5 6">
    <location>
        <position position="131"/>
    </location>
</feature>
<feature type="binding site" evidence="1 5">
    <location>
        <begin position="17"/>
        <end position="25"/>
    </location>
    <ligand>
        <name>ATP</name>
        <dbReference type="ChEBI" id="CHEBI:30616"/>
    </ligand>
</feature>
<feature type="binding site" evidence="1 5">
    <location>
        <position position="43"/>
    </location>
    <ligand>
        <name>ATP</name>
        <dbReference type="ChEBI" id="CHEBI:30616"/>
    </ligand>
</feature>
<protein>
    <recommendedName>
        <fullName evidence="3">Probable serine/threonine-protein kinase fnkB</fullName>
        <ecNumber>2.7.11.1</ecNumber>
    </recommendedName>
    <alternativeName>
        <fullName evidence="7">FNIP repeat-containing protein B</fullName>
    </alternativeName>
</protein>
<organism>
    <name type="scientific">Dictyostelium discoideum</name>
    <name type="common">Social amoeba</name>
    <dbReference type="NCBI Taxonomy" id="44689"/>
    <lineage>
        <taxon>Eukaryota</taxon>
        <taxon>Amoebozoa</taxon>
        <taxon>Evosea</taxon>
        <taxon>Eumycetozoa</taxon>
        <taxon>Dictyostelia</taxon>
        <taxon>Dictyosteliales</taxon>
        <taxon>Dictyosteliaceae</taxon>
        <taxon>Dictyostelium</taxon>
    </lineage>
</organism>
<proteinExistence type="inferred from homology"/>
<reference evidence="8" key="1">
    <citation type="journal article" date="2005" name="Nature">
        <title>The genome of the social amoeba Dictyostelium discoideum.</title>
        <authorList>
            <person name="Eichinger L."/>
            <person name="Pachebat J.A."/>
            <person name="Gloeckner G."/>
            <person name="Rajandream M.A."/>
            <person name="Sucgang R."/>
            <person name="Berriman M."/>
            <person name="Song J."/>
            <person name="Olsen R."/>
            <person name="Szafranski K."/>
            <person name="Xu Q."/>
            <person name="Tunggal B."/>
            <person name="Kummerfeld S."/>
            <person name="Madera M."/>
            <person name="Konfortov B.A."/>
            <person name="Rivero F."/>
            <person name="Bankier A.T."/>
            <person name="Lehmann R."/>
            <person name="Hamlin N."/>
            <person name="Davies R."/>
            <person name="Gaudet P."/>
            <person name="Fey P."/>
            <person name="Pilcher K."/>
            <person name="Chen G."/>
            <person name="Saunders D."/>
            <person name="Sodergren E.J."/>
            <person name="Davis P."/>
            <person name="Kerhornou A."/>
            <person name="Nie X."/>
            <person name="Hall N."/>
            <person name="Anjard C."/>
            <person name="Hemphill L."/>
            <person name="Bason N."/>
            <person name="Farbrother P."/>
            <person name="Desany B."/>
            <person name="Just E."/>
            <person name="Morio T."/>
            <person name="Rost R."/>
            <person name="Churcher C.M."/>
            <person name="Cooper J."/>
            <person name="Haydock S."/>
            <person name="van Driessche N."/>
            <person name="Cronin A."/>
            <person name="Goodhead I."/>
            <person name="Muzny D.M."/>
            <person name="Mourier T."/>
            <person name="Pain A."/>
            <person name="Lu M."/>
            <person name="Harper D."/>
            <person name="Lindsay R."/>
            <person name="Hauser H."/>
            <person name="James K.D."/>
            <person name="Quiles M."/>
            <person name="Madan Babu M."/>
            <person name="Saito T."/>
            <person name="Buchrieser C."/>
            <person name="Wardroper A."/>
            <person name="Felder M."/>
            <person name="Thangavelu M."/>
            <person name="Johnson D."/>
            <person name="Knights A."/>
            <person name="Loulseged H."/>
            <person name="Mungall K.L."/>
            <person name="Oliver K."/>
            <person name="Price C."/>
            <person name="Quail M.A."/>
            <person name="Urushihara H."/>
            <person name="Hernandez J."/>
            <person name="Rabbinowitsch E."/>
            <person name="Steffen D."/>
            <person name="Sanders M."/>
            <person name="Ma J."/>
            <person name="Kohara Y."/>
            <person name="Sharp S."/>
            <person name="Simmonds M.N."/>
            <person name="Spiegler S."/>
            <person name="Tivey A."/>
            <person name="Sugano S."/>
            <person name="White B."/>
            <person name="Walker D."/>
            <person name="Woodward J.R."/>
            <person name="Winckler T."/>
            <person name="Tanaka Y."/>
            <person name="Shaulsky G."/>
            <person name="Schleicher M."/>
            <person name="Weinstock G.M."/>
            <person name="Rosenthal A."/>
            <person name="Cox E.C."/>
            <person name="Chisholm R.L."/>
            <person name="Gibbs R.A."/>
            <person name="Loomis W.F."/>
            <person name="Platzer M."/>
            <person name="Kay R.R."/>
            <person name="Williams J.G."/>
            <person name="Dear P.H."/>
            <person name="Noegel A.A."/>
            <person name="Barrell B.G."/>
            <person name="Kuspa A."/>
        </authorList>
    </citation>
    <scope>NUCLEOTIDE SEQUENCE [LARGE SCALE GENOMIC DNA]</scope>
    <source>
        <strain evidence="8">AX4</strain>
    </source>
</reference>
<dbReference type="EC" id="2.7.11.1"/>
<dbReference type="EMBL" id="AAFI02000003">
    <property type="protein sequence ID" value="EAL73420.1"/>
    <property type="molecule type" value="Genomic_DNA"/>
</dbReference>
<dbReference type="RefSeq" id="XP_647429.1">
    <property type="nucleotide sequence ID" value="XM_642337.1"/>
</dbReference>
<dbReference type="SMR" id="Q55FV4"/>
<dbReference type="FunCoup" id="Q55FV4">
    <property type="interactions" value="664"/>
</dbReference>
<dbReference type="STRING" id="44689.Q55FV4"/>
<dbReference type="PaxDb" id="44689-DDB0229295"/>
<dbReference type="EnsemblProtists" id="EAL73420">
    <property type="protein sequence ID" value="EAL73420"/>
    <property type="gene ID" value="DDB_G0267934"/>
</dbReference>
<dbReference type="GeneID" id="8616236"/>
<dbReference type="KEGG" id="ddi:DDB_G0267934"/>
<dbReference type="dictyBase" id="DDB_G0267934">
    <property type="gene designation" value="fnkB"/>
</dbReference>
<dbReference type="VEuPathDB" id="AmoebaDB:DDB_G0267934"/>
<dbReference type="eggNOG" id="KOG4645">
    <property type="taxonomic scope" value="Eukaryota"/>
</dbReference>
<dbReference type="HOGENOM" id="CLU_514305_0_0_1"/>
<dbReference type="InParanoid" id="Q55FV4"/>
<dbReference type="OMA" id="SENWEIL"/>
<dbReference type="PhylomeDB" id="Q55FV4"/>
<dbReference type="PRO" id="PR:Q55FV4"/>
<dbReference type="Proteomes" id="UP000002195">
    <property type="component" value="Chromosome 1"/>
</dbReference>
<dbReference type="GO" id="GO:0005737">
    <property type="term" value="C:cytoplasm"/>
    <property type="evidence" value="ECO:0000318"/>
    <property type="project" value="GO_Central"/>
</dbReference>
<dbReference type="GO" id="GO:0005524">
    <property type="term" value="F:ATP binding"/>
    <property type="evidence" value="ECO:0007669"/>
    <property type="project" value="UniProtKB-KW"/>
</dbReference>
<dbReference type="GO" id="GO:0046872">
    <property type="term" value="F:metal ion binding"/>
    <property type="evidence" value="ECO:0007669"/>
    <property type="project" value="UniProtKB-KW"/>
</dbReference>
<dbReference type="GO" id="GO:0106310">
    <property type="term" value="F:protein serine kinase activity"/>
    <property type="evidence" value="ECO:0007669"/>
    <property type="project" value="RHEA"/>
</dbReference>
<dbReference type="GO" id="GO:0004674">
    <property type="term" value="F:protein serine/threonine kinase activity"/>
    <property type="evidence" value="ECO:0000318"/>
    <property type="project" value="GO_Central"/>
</dbReference>
<dbReference type="GO" id="GO:0035556">
    <property type="term" value="P:intracellular signal transduction"/>
    <property type="evidence" value="ECO:0000318"/>
    <property type="project" value="GO_Central"/>
</dbReference>
<dbReference type="FunFam" id="1.10.510.10:FF:002456">
    <property type="entry name" value="Probable serine/threonine-protein kinase fnkB"/>
    <property type="match status" value="1"/>
</dbReference>
<dbReference type="Gene3D" id="1.10.510.10">
    <property type="entry name" value="Transferase(Phosphotransferase) domain 1"/>
    <property type="match status" value="1"/>
</dbReference>
<dbReference type="InterPro" id="IPR008615">
    <property type="entry name" value="FNIP"/>
</dbReference>
<dbReference type="InterPro" id="IPR011009">
    <property type="entry name" value="Kinase-like_dom_sf"/>
</dbReference>
<dbReference type="InterPro" id="IPR000719">
    <property type="entry name" value="Prot_kinase_dom"/>
</dbReference>
<dbReference type="InterPro" id="IPR008271">
    <property type="entry name" value="Ser/Thr_kinase_AS"/>
</dbReference>
<dbReference type="PANTHER" id="PTHR11584:SF369">
    <property type="entry name" value="MITOGEN-ACTIVATED PROTEIN KINASE KINASE KINASE 19-RELATED"/>
    <property type="match status" value="1"/>
</dbReference>
<dbReference type="PANTHER" id="PTHR11584">
    <property type="entry name" value="SERINE/THREONINE PROTEIN KINASE"/>
    <property type="match status" value="1"/>
</dbReference>
<dbReference type="Pfam" id="PF05725">
    <property type="entry name" value="FNIP"/>
    <property type="match status" value="1"/>
</dbReference>
<dbReference type="Pfam" id="PF00069">
    <property type="entry name" value="Pkinase"/>
    <property type="match status" value="1"/>
</dbReference>
<dbReference type="SMART" id="SM00220">
    <property type="entry name" value="S_TKc"/>
    <property type="match status" value="1"/>
</dbReference>
<dbReference type="SUPFAM" id="SSF56112">
    <property type="entry name" value="Protein kinase-like (PK-like)"/>
    <property type="match status" value="1"/>
</dbReference>
<dbReference type="PROSITE" id="PS50011">
    <property type="entry name" value="PROTEIN_KINASE_DOM"/>
    <property type="match status" value="1"/>
</dbReference>
<dbReference type="PROSITE" id="PS00108">
    <property type="entry name" value="PROTEIN_KINASE_ST"/>
    <property type="match status" value="1"/>
</dbReference>
<comment type="catalytic activity">
    <reaction evidence="2">
        <text>L-seryl-[protein] + ATP = O-phospho-L-seryl-[protein] + ADP + H(+)</text>
        <dbReference type="Rhea" id="RHEA:17989"/>
        <dbReference type="Rhea" id="RHEA-COMP:9863"/>
        <dbReference type="Rhea" id="RHEA-COMP:11604"/>
        <dbReference type="ChEBI" id="CHEBI:15378"/>
        <dbReference type="ChEBI" id="CHEBI:29999"/>
        <dbReference type="ChEBI" id="CHEBI:30616"/>
        <dbReference type="ChEBI" id="CHEBI:83421"/>
        <dbReference type="ChEBI" id="CHEBI:456216"/>
        <dbReference type="EC" id="2.7.11.1"/>
    </reaction>
</comment>
<comment type="catalytic activity">
    <reaction evidence="2">
        <text>L-threonyl-[protein] + ATP = O-phospho-L-threonyl-[protein] + ADP + H(+)</text>
        <dbReference type="Rhea" id="RHEA:46608"/>
        <dbReference type="Rhea" id="RHEA-COMP:11060"/>
        <dbReference type="Rhea" id="RHEA-COMP:11605"/>
        <dbReference type="ChEBI" id="CHEBI:15378"/>
        <dbReference type="ChEBI" id="CHEBI:30013"/>
        <dbReference type="ChEBI" id="CHEBI:30616"/>
        <dbReference type="ChEBI" id="CHEBI:61977"/>
        <dbReference type="ChEBI" id="CHEBI:456216"/>
        <dbReference type="EC" id="2.7.11.1"/>
    </reaction>
</comment>
<comment type="cofactor">
    <cofactor evidence="2">
        <name>Mg(2+)</name>
        <dbReference type="ChEBI" id="CHEBI:18420"/>
    </cofactor>
</comment>
<comment type="similarity">
    <text evidence="4">Belongs to the protein kinase superfamily. STE Ser/Thr protein kinase family.</text>
</comment>
<sequence>MNSYIYKEEDWEIVETLKSNVFKVNNKNNIVLNGNSFKTCILKIIINKDKNVWKEGQVLEKLKNIDSIVKCYGWCCNKHTTYIFIEYINGYTLEEYVLKNHPIPEKELSEIIEDLIKSLASIHEIGVIHRDLKLENVMFDKESNKWKLIDFGLSFSFSPSNDGSKCYTQCGSIGYIPPEIKLGGQCGRKSDIWIFGCLVIKMLGGELEETEIQIDGASFNNNNNKPNIWIPKIPPHASKFLQNFIQKCFFEEEVLRFDSITLIDHPFLSLFKSKGNMLYLIQRGHKRWMDITQKKKGIKIEGKTFTFEDNDNKEPFGPGIVPDGTVELIFKKTFNQRLIPGSIPSTVQILDFGVDGDSFFNQEMDDDLFLDCDLKSLTLGNAFTHTLPYFGSLCYLSLGRNRNALQNLPPTLETLKYYGEVQTDLNIKSIPHVKNLLIPFNNHSIIIDTIPPTVKYLAWGKLKDLEAIETLKNLPPSVNDLTFSCPPDVFDKIQRKHIPDSISIIIINQHVIELKNSDNSETYLKDNIVC</sequence>
<evidence type="ECO:0000250" key="1">
    <source>
        <dbReference type="UniProtKB" id="P28523"/>
    </source>
</evidence>
<evidence type="ECO:0000250" key="2">
    <source>
        <dbReference type="UniProtKB" id="Q869N2"/>
    </source>
</evidence>
<evidence type="ECO:0000250" key="3">
    <source>
        <dbReference type="UniProtKB" id="Q8T126"/>
    </source>
</evidence>
<evidence type="ECO:0000255" key="4"/>
<evidence type="ECO:0000255" key="5">
    <source>
        <dbReference type="PROSITE-ProRule" id="PRU00159"/>
    </source>
</evidence>
<evidence type="ECO:0000255" key="6">
    <source>
        <dbReference type="PROSITE-ProRule" id="PRU10027"/>
    </source>
</evidence>
<evidence type="ECO:0000312" key="7">
    <source>
        <dbReference type="dictyBase" id="DDB_G0267934"/>
    </source>
</evidence>
<evidence type="ECO:0000312" key="8">
    <source>
        <dbReference type="EMBL" id="EAL73420.1"/>
    </source>
</evidence>
<accession>Q55FV4</accession>